<accession>Q69BZ7</accession>
<name>EF1B_PENCI</name>
<reference evidence="7" key="1">
    <citation type="journal article" date="2005" name="Allergy">
        <title>cDNA cloning and immunologic characterization of a novel EF-1beta allergen from Penicillium citrinum.</title>
        <authorList>
            <person name="Tang R.B."/>
            <person name="Chen Y.S."/>
            <person name="Chou H."/>
            <person name="Lee S.S."/>
            <person name="Tai H.Y."/>
            <person name="Shen H.D."/>
        </authorList>
    </citation>
    <scope>NUCLEOTIDE SEQUENCE [MRNA]</scope>
    <scope>ALLERGEN</scope>
    <scope>REGION</scope>
    <source>
        <strain evidence="5">52-5</strain>
    </source>
</reference>
<evidence type="ECO:0000250" key="1">
    <source>
        <dbReference type="UniProtKB" id="P32471"/>
    </source>
</evidence>
<evidence type="ECO:0000255" key="2">
    <source>
        <dbReference type="RuleBase" id="RU003791"/>
    </source>
</evidence>
<evidence type="ECO:0000256" key="3">
    <source>
        <dbReference type="SAM" id="MobiDB-lite"/>
    </source>
</evidence>
<evidence type="ECO:0000269" key="4">
    <source>
    </source>
</evidence>
<evidence type="ECO:0000303" key="5">
    <source>
    </source>
</evidence>
<evidence type="ECO:0000305" key="6"/>
<evidence type="ECO:0000312" key="7">
    <source>
        <dbReference type="EMBL" id="AAR17475.1"/>
    </source>
</evidence>
<keyword id="KW-0020">Allergen</keyword>
<keyword id="KW-0251">Elongation factor</keyword>
<keyword id="KW-0389">IgE-binding protein</keyword>
<keyword id="KW-0648">Protein biosynthesis</keyword>
<comment type="function">
    <text evidence="1">EF-1-beta and EF-1-delta stimulate the exchange of GDP bound to EF-1-alpha to GTP.</text>
</comment>
<comment type="subunit">
    <text evidence="6">EF-1 is composed of 4 subunits: alpha, beta, delta, and gamma.</text>
</comment>
<comment type="allergen">
    <text evidence="4">Causes an allergic reaction in human. Binds to IgE in 8% of 92 Taipei area patients suffering from bronchial asthma.</text>
</comment>
<comment type="similarity">
    <text evidence="2 6">Belongs to the EF-1-beta/EF-1-delta family.</text>
</comment>
<feature type="chain" id="PRO_0000446262" description="Elongation factor 1-beta">
    <location>
        <begin position="1"/>
        <end position="228"/>
    </location>
</feature>
<feature type="region of interest" description="Disordered" evidence="3">
    <location>
        <begin position="74"/>
        <end position="116"/>
    </location>
</feature>
<feature type="region of interest" description="IgE-binding" evidence="4">
    <location>
        <begin position="84"/>
        <end position="93"/>
    </location>
</feature>
<feature type="compositionally biased region" description="Acidic residues" evidence="3">
    <location>
        <begin position="97"/>
        <end position="115"/>
    </location>
</feature>
<dbReference type="EMBL" id="AY363911">
    <property type="protein sequence ID" value="AAR17475.1"/>
    <property type="molecule type" value="mRNA"/>
</dbReference>
<dbReference type="SMR" id="Q69BZ7"/>
<dbReference type="Allergome" id="1311">
    <property type="allergen name" value="Pen c 24"/>
</dbReference>
<dbReference type="Allergome" id="3404">
    <property type="allergen name" value="Pen c 24.0101"/>
</dbReference>
<dbReference type="GO" id="GO:0005829">
    <property type="term" value="C:cytosol"/>
    <property type="evidence" value="ECO:0007669"/>
    <property type="project" value="TreeGrafter"/>
</dbReference>
<dbReference type="GO" id="GO:0005853">
    <property type="term" value="C:eukaryotic translation elongation factor 1 complex"/>
    <property type="evidence" value="ECO:0000250"/>
    <property type="project" value="UniProtKB"/>
</dbReference>
<dbReference type="GO" id="GO:0005085">
    <property type="term" value="F:guanyl-nucleotide exchange factor activity"/>
    <property type="evidence" value="ECO:0000250"/>
    <property type="project" value="UniProtKB"/>
</dbReference>
<dbReference type="GO" id="GO:0019863">
    <property type="term" value="F:IgE binding"/>
    <property type="evidence" value="ECO:0007669"/>
    <property type="project" value="UniProtKB-KW"/>
</dbReference>
<dbReference type="GO" id="GO:0003746">
    <property type="term" value="F:translation elongation factor activity"/>
    <property type="evidence" value="ECO:0007669"/>
    <property type="project" value="UniProtKB-KW"/>
</dbReference>
<dbReference type="CDD" id="cd00292">
    <property type="entry name" value="EF1B"/>
    <property type="match status" value="1"/>
</dbReference>
<dbReference type="FunFam" id="3.30.70.60:FF:000001">
    <property type="entry name" value="Elongation factor 1-beta 1 like"/>
    <property type="match status" value="1"/>
</dbReference>
<dbReference type="FunFam" id="1.20.1050.130:FF:000001">
    <property type="entry name" value="Putative Elongation factor 1-beta"/>
    <property type="match status" value="1"/>
</dbReference>
<dbReference type="Gene3D" id="1.20.1050.130">
    <property type="match status" value="1"/>
</dbReference>
<dbReference type="Gene3D" id="3.30.70.60">
    <property type="match status" value="1"/>
</dbReference>
<dbReference type="InterPro" id="IPR036219">
    <property type="entry name" value="eEF-1beta-like_sf"/>
</dbReference>
<dbReference type="InterPro" id="IPR018940">
    <property type="entry name" value="EF-1_beta_acid_region_euk"/>
</dbReference>
<dbReference type="InterPro" id="IPR049720">
    <property type="entry name" value="EF1B_bsu/dsu"/>
</dbReference>
<dbReference type="InterPro" id="IPR014038">
    <property type="entry name" value="EF1B_bsu/dsu_GNE"/>
</dbReference>
<dbReference type="InterPro" id="IPR036282">
    <property type="entry name" value="Glutathione-S-Trfase_C_sf"/>
</dbReference>
<dbReference type="InterPro" id="IPR014717">
    <property type="entry name" value="Transl_elong_EF1B/ribsomal_bS6"/>
</dbReference>
<dbReference type="InterPro" id="IPR001326">
    <property type="entry name" value="Transl_elong_EF1B_B/D_CS"/>
</dbReference>
<dbReference type="PANTHER" id="PTHR11595">
    <property type="entry name" value="EF-HAND AND COILED-COIL DOMAIN-CONTAINING FAMILY MEMBER"/>
    <property type="match status" value="1"/>
</dbReference>
<dbReference type="PANTHER" id="PTHR11595:SF21">
    <property type="entry name" value="ELONGATION FACTOR 1-BETA"/>
    <property type="match status" value="1"/>
</dbReference>
<dbReference type="Pfam" id="PF10587">
    <property type="entry name" value="EF-1_beta_acid"/>
    <property type="match status" value="1"/>
</dbReference>
<dbReference type="Pfam" id="PF00736">
    <property type="entry name" value="EF1_GNE"/>
    <property type="match status" value="1"/>
</dbReference>
<dbReference type="SMART" id="SM00888">
    <property type="entry name" value="EF1_GNE"/>
    <property type="match status" value="1"/>
</dbReference>
<dbReference type="SUPFAM" id="SSF54984">
    <property type="entry name" value="eEF-1beta-like"/>
    <property type="match status" value="1"/>
</dbReference>
<dbReference type="SUPFAM" id="SSF47616">
    <property type="entry name" value="GST C-terminal domain-like"/>
    <property type="match status" value="1"/>
</dbReference>
<dbReference type="PROSITE" id="PS00825">
    <property type="entry name" value="EF1BD_2"/>
    <property type="match status" value="1"/>
</dbReference>
<organism evidence="7">
    <name type="scientific">Penicillium citrinum</name>
    <dbReference type="NCBI Taxonomy" id="5077"/>
    <lineage>
        <taxon>Eukaryota</taxon>
        <taxon>Fungi</taxon>
        <taxon>Dikarya</taxon>
        <taxon>Ascomycota</taxon>
        <taxon>Pezizomycotina</taxon>
        <taxon>Eurotiomycetes</taxon>
        <taxon>Eurotiomycetidae</taxon>
        <taxon>Eurotiales</taxon>
        <taxon>Aspergillaceae</taxon>
        <taxon>Penicillium</taxon>
    </lineage>
</organism>
<protein>
    <recommendedName>
        <fullName evidence="5">Elongation factor 1-beta</fullName>
        <shortName evidence="5">EF-1-beta</shortName>
    </recommendedName>
    <allergenName evidence="5">Pen c 24</allergenName>
</protein>
<sequence length="228" mass="25049">MGFTDFVSDAGLSLANNYLATRSYIVGHAPSQADVVTYKAFTASPDAEKYPHVARWYKHIASYESEFPTLPGDASKAFTAYGPEGSEASANPKDKPAEEEEEEDLFASDSEDEDPAVVAERNKNLEEYKKKKAAKGPKPAAKSLVTLEVKPWDDETNLEELEANVRAIEMDGLVWGASKFVAVGFGIKKLQINLVVEDEKVSTDELQAQIEEDEDHVQSTDVAAMQKL</sequence>
<proteinExistence type="evidence at protein level"/>